<gene>
    <name type="primary">RpL13</name>
</gene>
<evidence type="ECO:0000250" key="1">
    <source>
        <dbReference type="UniProtKB" id="P26373"/>
    </source>
</evidence>
<evidence type="ECO:0000256" key="2">
    <source>
        <dbReference type="SAM" id="MobiDB-lite"/>
    </source>
</evidence>
<evidence type="ECO:0000305" key="3"/>
<proteinExistence type="evidence at transcript level"/>
<organism>
    <name type="scientific">Spodoptera frugiperda</name>
    <name type="common">Fall armyworm</name>
    <dbReference type="NCBI Taxonomy" id="7108"/>
    <lineage>
        <taxon>Eukaryota</taxon>
        <taxon>Metazoa</taxon>
        <taxon>Ecdysozoa</taxon>
        <taxon>Arthropoda</taxon>
        <taxon>Hexapoda</taxon>
        <taxon>Insecta</taxon>
        <taxon>Pterygota</taxon>
        <taxon>Neoptera</taxon>
        <taxon>Endopterygota</taxon>
        <taxon>Lepidoptera</taxon>
        <taxon>Glossata</taxon>
        <taxon>Ditrysia</taxon>
        <taxon>Noctuoidea</taxon>
        <taxon>Noctuidae</taxon>
        <taxon>Amphipyrinae</taxon>
        <taxon>Spodoptera</taxon>
    </lineage>
</organism>
<feature type="chain" id="PRO_0000192926" description="Large ribosomal subunit protein eL13">
    <location>
        <begin position="1"/>
        <end position="219"/>
    </location>
</feature>
<feature type="region of interest" description="Disordered" evidence="2">
    <location>
        <begin position="198"/>
        <end position="219"/>
    </location>
</feature>
<sequence length="219" mass="24963">MGKGNNMIPNGHFHKDWQRFVKTWFNQPARRHRRKQNRIKKAKAVAPRPAAGPLRPVVRCPTIRYHTKVRAGRGFTLREIRAAGLNPAFARTIGIAVDPRRRNKSVESLQVNVQRLKEYRARLILFPKGKKVLKGEANEEERKLATQLRGPLMPVQQPAPKSIARAITEEEKDFKAYQYLRGARSIAKLVGIRAKRLKDAAENPDDVTKAPTAVKRNKT</sequence>
<keyword id="KW-0963">Cytoplasm</keyword>
<keyword id="KW-0687">Ribonucleoprotein</keyword>
<keyword id="KW-0689">Ribosomal protein</keyword>
<comment type="function">
    <text evidence="1">Component of the ribosome, a large ribonucleoprotein complex responsible for the synthesis of proteins in the cell. The small ribosomal subunit (SSU) binds messenger RNAs (mRNAs) and translates the encoded message by selecting cognate aminoacyl-transfer RNA (tRNA) molecules. The large subunit (LSU) contains the ribosomal catalytic site termed the peptidyl transferase center (PTC), which catalyzes the formation of peptide bonds, thereby polymerizing the amino acids delivered by tRNAs into a polypeptide chain. The nascent polypeptides leave the ribosome through a tunnel in the LSU and interact with protein factors that function in enzymatic processing, targeting, and the membrane insertion of nascent chains at the exit of the ribosomal tunnel. As part of the LSU, it is probably required for its formation and the maturation of rRNAs.</text>
</comment>
<comment type="subunit">
    <text evidence="1">Component of the 60S large ribosomal subunit (LSU).</text>
</comment>
<comment type="subcellular location">
    <subcellularLocation>
        <location evidence="1">Cytoplasm</location>
    </subcellularLocation>
</comment>
<comment type="similarity">
    <text evidence="3">Belongs to the eukaryotic ribosomal protein eL13 family.</text>
</comment>
<reference key="1">
    <citation type="journal article" date="2003" name="Bioinformatics">
        <title>Annotation pattern of ESTs from Spodoptera frugiperda Sf9 cells and analysis of the ribosomal protein genes reveal insect-specific features and unexpectedly low codon usage bias.</title>
        <authorList>
            <person name="Landais I."/>
            <person name="Ogliastro M."/>
            <person name="Mita K."/>
            <person name="Nohata J."/>
            <person name="Lopez-Ferber M."/>
            <person name="Duonor-Cerutti M."/>
            <person name="Shimada T."/>
            <person name="Fournier P."/>
            <person name="Devauchelle G."/>
        </authorList>
    </citation>
    <scope>NUCLEOTIDE SEQUENCE [LARGE SCALE MRNA]</scope>
</reference>
<name>RL13_SPOFR</name>
<protein>
    <recommendedName>
        <fullName evidence="3">Large ribosomal subunit protein eL13</fullName>
    </recommendedName>
    <alternativeName>
        <fullName>60S ribosomal protein L13</fullName>
    </alternativeName>
</protein>
<accession>Q962U1</accession>
<dbReference type="EMBL" id="AF400183">
    <property type="protein sequence ID" value="AAK92155.1"/>
    <property type="molecule type" value="mRNA"/>
</dbReference>
<dbReference type="SMR" id="Q962U1"/>
<dbReference type="OrthoDB" id="10264538at2759"/>
<dbReference type="Proteomes" id="UP000829999">
    <property type="component" value="Unplaced"/>
</dbReference>
<dbReference type="GO" id="GO:0005829">
    <property type="term" value="C:cytosol"/>
    <property type="evidence" value="ECO:0000250"/>
    <property type="project" value="UniProtKB"/>
</dbReference>
<dbReference type="GO" id="GO:0022625">
    <property type="term" value="C:cytosolic large ribosomal subunit"/>
    <property type="evidence" value="ECO:0007669"/>
    <property type="project" value="TreeGrafter"/>
</dbReference>
<dbReference type="GO" id="GO:0003723">
    <property type="term" value="F:RNA binding"/>
    <property type="evidence" value="ECO:0007669"/>
    <property type="project" value="TreeGrafter"/>
</dbReference>
<dbReference type="GO" id="GO:0003735">
    <property type="term" value="F:structural constituent of ribosome"/>
    <property type="evidence" value="ECO:0007669"/>
    <property type="project" value="InterPro"/>
</dbReference>
<dbReference type="GO" id="GO:0006412">
    <property type="term" value="P:translation"/>
    <property type="evidence" value="ECO:0007669"/>
    <property type="project" value="InterPro"/>
</dbReference>
<dbReference type="FunFam" id="1.20.5.110:FF:000003">
    <property type="entry name" value="60S ribosomal protein L13"/>
    <property type="match status" value="1"/>
</dbReference>
<dbReference type="Gene3D" id="1.20.5.110">
    <property type="match status" value="1"/>
</dbReference>
<dbReference type="HAMAP" id="MF_00499">
    <property type="entry name" value="Ribosomal_eL13"/>
    <property type="match status" value="1"/>
</dbReference>
<dbReference type="InterPro" id="IPR001380">
    <property type="entry name" value="Ribosomal_eL13"/>
</dbReference>
<dbReference type="InterPro" id="IPR018256">
    <property type="entry name" value="Ribosomal_eL13_CS"/>
</dbReference>
<dbReference type="PANTHER" id="PTHR11722">
    <property type="entry name" value="60S RIBOSOMAL PROTEIN L13"/>
    <property type="match status" value="1"/>
</dbReference>
<dbReference type="PANTHER" id="PTHR11722:SF0">
    <property type="entry name" value="LARGE RIBOSOMAL SUBUNIT PROTEIN EL13"/>
    <property type="match status" value="1"/>
</dbReference>
<dbReference type="Pfam" id="PF01294">
    <property type="entry name" value="Ribosomal_L13e"/>
    <property type="match status" value="1"/>
</dbReference>
<dbReference type="PROSITE" id="PS01104">
    <property type="entry name" value="RIBOSOMAL_L13E"/>
    <property type="match status" value="1"/>
</dbReference>